<feature type="chain" id="PRO_0000225761" description="Large ribosomal subunit protein bL32">
    <location>
        <begin position="1"/>
        <end position="57"/>
    </location>
</feature>
<feature type="region of interest" description="Disordered" evidence="2">
    <location>
        <begin position="1"/>
        <end position="38"/>
    </location>
</feature>
<sequence>MAVQQNKPTRSKRGMRRSHDALTAVTSLSVDKTSGEKHLRHHITADGYYRGRKVIAK</sequence>
<protein>
    <recommendedName>
        <fullName evidence="1">Large ribosomal subunit protein bL32</fullName>
    </recommendedName>
    <alternativeName>
        <fullName evidence="3">50S ribosomal protein L32</fullName>
    </alternativeName>
</protein>
<gene>
    <name evidence="1" type="primary">rpmF</name>
    <name type="ordered locus">SPA1660</name>
</gene>
<reference key="1">
    <citation type="journal article" date="2004" name="Nat. Genet.">
        <title>Comparison of genome degradation in Paratyphi A and Typhi, human-restricted serovars of Salmonella enterica that cause typhoid.</title>
        <authorList>
            <person name="McClelland M."/>
            <person name="Sanderson K.E."/>
            <person name="Clifton S.W."/>
            <person name="Latreille P."/>
            <person name="Porwollik S."/>
            <person name="Sabo A."/>
            <person name="Meyer R."/>
            <person name="Bieri T."/>
            <person name="Ozersky P."/>
            <person name="McLellan M."/>
            <person name="Harkins C.R."/>
            <person name="Wang C."/>
            <person name="Nguyen C."/>
            <person name="Berghoff A."/>
            <person name="Elliott G."/>
            <person name="Kohlberg S."/>
            <person name="Strong C."/>
            <person name="Du F."/>
            <person name="Carter J."/>
            <person name="Kremizki C."/>
            <person name="Layman D."/>
            <person name="Leonard S."/>
            <person name="Sun H."/>
            <person name="Fulton L."/>
            <person name="Nash W."/>
            <person name="Miner T."/>
            <person name="Minx P."/>
            <person name="Delehaunty K."/>
            <person name="Fronick C."/>
            <person name="Magrini V."/>
            <person name="Nhan M."/>
            <person name="Warren W."/>
            <person name="Florea L."/>
            <person name="Spieth J."/>
            <person name="Wilson R.K."/>
        </authorList>
    </citation>
    <scope>NUCLEOTIDE SEQUENCE [LARGE SCALE GENOMIC DNA]</scope>
    <source>
        <strain>ATCC 9150 / SARB42</strain>
    </source>
</reference>
<proteinExistence type="inferred from homology"/>
<name>RL32_SALPA</name>
<comment type="similarity">
    <text evidence="1">Belongs to the bacterial ribosomal protein bL32 family.</text>
</comment>
<organism>
    <name type="scientific">Salmonella paratyphi A (strain ATCC 9150 / SARB42)</name>
    <dbReference type="NCBI Taxonomy" id="295319"/>
    <lineage>
        <taxon>Bacteria</taxon>
        <taxon>Pseudomonadati</taxon>
        <taxon>Pseudomonadota</taxon>
        <taxon>Gammaproteobacteria</taxon>
        <taxon>Enterobacterales</taxon>
        <taxon>Enterobacteriaceae</taxon>
        <taxon>Salmonella</taxon>
    </lineage>
</organism>
<keyword id="KW-0687">Ribonucleoprotein</keyword>
<keyword id="KW-0689">Ribosomal protein</keyword>
<evidence type="ECO:0000255" key="1">
    <source>
        <dbReference type="HAMAP-Rule" id="MF_00340"/>
    </source>
</evidence>
<evidence type="ECO:0000256" key="2">
    <source>
        <dbReference type="SAM" id="MobiDB-lite"/>
    </source>
</evidence>
<evidence type="ECO:0000305" key="3"/>
<accession>Q5PGT9</accession>
<dbReference type="EMBL" id="CP000026">
    <property type="protein sequence ID" value="AAV77586.1"/>
    <property type="molecule type" value="Genomic_DNA"/>
</dbReference>
<dbReference type="RefSeq" id="WP_000290727.1">
    <property type="nucleotide sequence ID" value="NC_006511.1"/>
</dbReference>
<dbReference type="SMR" id="Q5PGT9"/>
<dbReference type="GeneID" id="93776319"/>
<dbReference type="KEGG" id="spt:SPA1660"/>
<dbReference type="HOGENOM" id="CLU_129084_2_1_6"/>
<dbReference type="Proteomes" id="UP000008185">
    <property type="component" value="Chromosome"/>
</dbReference>
<dbReference type="GO" id="GO:0015934">
    <property type="term" value="C:large ribosomal subunit"/>
    <property type="evidence" value="ECO:0007669"/>
    <property type="project" value="InterPro"/>
</dbReference>
<dbReference type="GO" id="GO:0003735">
    <property type="term" value="F:structural constituent of ribosome"/>
    <property type="evidence" value="ECO:0007669"/>
    <property type="project" value="InterPro"/>
</dbReference>
<dbReference type="GO" id="GO:0006412">
    <property type="term" value="P:translation"/>
    <property type="evidence" value="ECO:0007669"/>
    <property type="project" value="UniProtKB-UniRule"/>
</dbReference>
<dbReference type="HAMAP" id="MF_00340">
    <property type="entry name" value="Ribosomal_bL32"/>
    <property type="match status" value="1"/>
</dbReference>
<dbReference type="InterPro" id="IPR002677">
    <property type="entry name" value="Ribosomal_bL32"/>
</dbReference>
<dbReference type="InterPro" id="IPR044957">
    <property type="entry name" value="Ribosomal_bL32_bact"/>
</dbReference>
<dbReference type="InterPro" id="IPR011332">
    <property type="entry name" value="Ribosomal_zn-bd"/>
</dbReference>
<dbReference type="NCBIfam" id="TIGR01031">
    <property type="entry name" value="rpmF_bact"/>
    <property type="match status" value="1"/>
</dbReference>
<dbReference type="PANTHER" id="PTHR35534">
    <property type="entry name" value="50S RIBOSOMAL PROTEIN L32"/>
    <property type="match status" value="1"/>
</dbReference>
<dbReference type="PANTHER" id="PTHR35534:SF1">
    <property type="entry name" value="LARGE RIBOSOMAL SUBUNIT PROTEIN BL32"/>
    <property type="match status" value="1"/>
</dbReference>
<dbReference type="Pfam" id="PF01783">
    <property type="entry name" value="Ribosomal_L32p"/>
    <property type="match status" value="1"/>
</dbReference>
<dbReference type="SUPFAM" id="SSF57829">
    <property type="entry name" value="Zn-binding ribosomal proteins"/>
    <property type="match status" value="1"/>
</dbReference>